<protein>
    <recommendedName>
        <fullName>CKLF-like MARVEL transmembrane domain-containing protein 8</fullName>
    </recommendedName>
    <alternativeName>
        <fullName>Chemokine-like factor superfamily member 8</fullName>
    </alternativeName>
</protein>
<reference key="1">
    <citation type="journal article" date="2003" name="Genomics">
        <title>Identification of eight genes encoding chemokine-like factor superfamily members 1-8 (CKLFSF1-8) by in silico cloning and experimental validation.</title>
        <authorList>
            <person name="Han W."/>
            <person name="Ding P."/>
            <person name="Xu M."/>
            <person name="Wang L."/>
            <person name="Rui M."/>
            <person name="Shi S."/>
            <person name="Liu Y."/>
            <person name="Zheng Y."/>
            <person name="Chen Y."/>
            <person name="Yang T."/>
            <person name="Ma D."/>
        </authorList>
    </citation>
    <scope>NUCLEOTIDE SEQUENCE [MRNA] (ISOFORM 1)</scope>
    <scope>TISSUE SPECIFICITY</scope>
    <source>
        <tissue>Tonsil</tissue>
    </source>
</reference>
<reference key="2">
    <citation type="journal article" date="2007" name="Int. J. Biochem. Cell Biol.">
        <title>An alternative splice form of CMTM8 induces apoptosis.</title>
        <authorList>
            <person name="Li D."/>
            <person name="Jin C."/>
            <person name="Yin C."/>
            <person name="Zhang Y."/>
            <person name="Pang B."/>
            <person name="Tian L."/>
            <person name="Han W."/>
            <person name="Ma D."/>
            <person name="Wang Y."/>
        </authorList>
    </citation>
    <scope>NUCLEOTIDE SEQUENCE [MRNA] (ISOFORM 2)</scope>
    <scope>ALTERNATIVE SPLICING</scope>
    <scope>SUBCELLULAR LOCATION</scope>
    <source>
        <tissue>Blood</tissue>
    </source>
</reference>
<reference key="3">
    <citation type="journal article" date="2006" name="Nature">
        <title>The DNA sequence, annotation and analysis of human chromosome 3.</title>
        <authorList>
            <person name="Muzny D.M."/>
            <person name="Scherer S.E."/>
            <person name="Kaul R."/>
            <person name="Wang J."/>
            <person name="Yu J."/>
            <person name="Sudbrak R."/>
            <person name="Buhay C.J."/>
            <person name="Chen R."/>
            <person name="Cree A."/>
            <person name="Ding Y."/>
            <person name="Dugan-Rocha S."/>
            <person name="Gill R."/>
            <person name="Gunaratne P."/>
            <person name="Harris R.A."/>
            <person name="Hawes A.C."/>
            <person name="Hernandez J."/>
            <person name="Hodgson A.V."/>
            <person name="Hume J."/>
            <person name="Jackson A."/>
            <person name="Khan Z.M."/>
            <person name="Kovar-Smith C."/>
            <person name="Lewis L.R."/>
            <person name="Lozado R.J."/>
            <person name="Metzker M.L."/>
            <person name="Milosavljevic A."/>
            <person name="Miner G.R."/>
            <person name="Morgan M.B."/>
            <person name="Nazareth L.V."/>
            <person name="Scott G."/>
            <person name="Sodergren E."/>
            <person name="Song X.-Z."/>
            <person name="Steffen D."/>
            <person name="Wei S."/>
            <person name="Wheeler D.A."/>
            <person name="Wright M.W."/>
            <person name="Worley K.C."/>
            <person name="Yuan Y."/>
            <person name="Zhang Z."/>
            <person name="Adams C.Q."/>
            <person name="Ansari-Lari M.A."/>
            <person name="Ayele M."/>
            <person name="Brown M.J."/>
            <person name="Chen G."/>
            <person name="Chen Z."/>
            <person name="Clendenning J."/>
            <person name="Clerc-Blankenburg K.P."/>
            <person name="Chen R."/>
            <person name="Chen Z."/>
            <person name="Davis C."/>
            <person name="Delgado O."/>
            <person name="Dinh H.H."/>
            <person name="Dong W."/>
            <person name="Draper H."/>
            <person name="Ernst S."/>
            <person name="Fu G."/>
            <person name="Gonzalez-Garay M.L."/>
            <person name="Garcia D.K."/>
            <person name="Gillett W."/>
            <person name="Gu J."/>
            <person name="Hao B."/>
            <person name="Haugen E."/>
            <person name="Havlak P."/>
            <person name="He X."/>
            <person name="Hennig S."/>
            <person name="Hu S."/>
            <person name="Huang W."/>
            <person name="Jackson L.R."/>
            <person name="Jacob L.S."/>
            <person name="Kelly S.H."/>
            <person name="Kube M."/>
            <person name="Levy R."/>
            <person name="Li Z."/>
            <person name="Liu B."/>
            <person name="Liu J."/>
            <person name="Liu W."/>
            <person name="Lu J."/>
            <person name="Maheshwari M."/>
            <person name="Nguyen B.-V."/>
            <person name="Okwuonu G.O."/>
            <person name="Palmeiri A."/>
            <person name="Pasternak S."/>
            <person name="Perez L.M."/>
            <person name="Phelps K.A."/>
            <person name="Plopper F.J."/>
            <person name="Qiang B."/>
            <person name="Raymond C."/>
            <person name="Rodriguez R."/>
            <person name="Saenphimmachak C."/>
            <person name="Santibanez J."/>
            <person name="Shen H."/>
            <person name="Shen Y."/>
            <person name="Subramanian S."/>
            <person name="Tabor P.E."/>
            <person name="Verduzco D."/>
            <person name="Waldron L."/>
            <person name="Wang J."/>
            <person name="Wang J."/>
            <person name="Wang Q."/>
            <person name="Williams G.A."/>
            <person name="Wong G.K.-S."/>
            <person name="Yao Z."/>
            <person name="Zhang J."/>
            <person name="Zhang X."/>
            <person name="Zhao G."/>
            <person name="Zhou J."/>
            <person name="Zhou Y."/>
            <person name="Nelson D."/>
            <person name="Lehrach H."/>
            <person name="Reinhardt R."/>
            <person name="Naylor S.L."/>
            <person name="Yang H."/>
            <person name="Olson M."/>
            <person name="Weinstock G."/>
            <person name="Gibbs R.A."/>
        </authorList>
    </citation>
    <scope>NUCLEOTIDE SEQUENCE [LARGE SCALE GENOMIC DNA]</scope>
</reference>
<reference key="4">
    <citation type="journal article" date="2004" name="Genome Res.">
        <title>The status, quality, and expansion of the NIH full-length cDNA project: the Mammalian Gene Collection (MGC).</title>
        <authorList>
            <consortium name="The MGC Project Team"/>
        </authorList>
    </citation>
    <scope>NUCLEOTIDE SEQUENCE [LARGE SCALE MRNA] (ISOFORM 1)</scope>
    <source>
        <tissue>Hippocampus</tissue>
    </source>
</reference>
<reference key="5">
    <citation type="journal article" date="2014" name="J. Proteomics">
        <title>An enzyme assisted RP-RPLC approach for in-depth analysis of human liver phosphoproteome.</title>
        <authorList>
            <person name="Bian Y."/>
            <person name="Song C."/>
            <person name="Cheng K."/>
            <person name="Dong M."/>
            <person name="Wang F."/>
            <person name="Huang J."/>
            <person name="Sun D."/>
            <person name="Wang L."/>
            <person name="Ye M."/>
            <person name="Zou H."/>
        </authorList>
    </citation>
    <scope>IDENTIFICATION BY MASS SPECTROMETRY [LARGE SCALE ANALYSIS]</scope>
    <source>
        <tissue>Liver</tissue>
    </source>
</reference>
<comment type="interaction">
    <interactant intactId="EBI-7868911">
        <id>Q8IZV2</id>
    </interactant>
    <interactant intactId="EBI-11749135">
        <id>Q8IUG1</id>
        <label>KRTAP1-3</label>
    </interactant>
    <organismsDiffer>false</organismsDiffer>
    <experiments>3</experiments>
</comment>
<comment type="interaction">
    <interactant intactId="EBI-7868911">
        <id>Q8IZV2</id>
    </interactant>
    <interactant intactId="EBI-8638294">
        <id>Q9NUH8</id>
        <label>TMEM14B</label>
    </interactant>
    <organismsDiffer>false</organismsDiffer>
    <experiments>3</experiments>
</comment>
<comment type="subcellular location">
    <molecule>Isoform 1</molecule>
    <subcellularLocation>
        <location>Membrane</location>
        <topology>Multi-pass membrane protein</topology>
    </subcellularLocation>
</comment>
<comment type="subcellular location">
    <molecule>Isoform 2</molecule>
    <subcellularLocation>
        <location>Cytoplasm</location>
    </subcellularLocation>
    <subcellularLocation>
        <location>Nucleus</location>
    </subcellularLocation>
</comment>
<comment type="alternative products">
    <event type="alternative splicing"/>
    <isoform>
        <id>Q8IZV2-1</id>
        <name>1</name>
        <sequence type="displayed"/>
    </isoform>
    <isoform>
        <id>Q8IZV2-2</id>
        <name>2</name>
        <name>CMTM8-v2</name>
        <sequence type="described" ref="VSP_044430"/>
    </isoform>
</comment>
<comment type="tissue specificity">
    <text evidence="3">Highly expressed in liver and pancreas.</text>
</comment>
<comment type="similarity">
    <text evidence="5">Belongs to the chemokine-like factor family.</text>
</comment>
<proteinExistence type="evidence at protein level"/>
<dbReference type="EMBL" id="AF474370">
    <property type="protein sequence ID" value="AAN73034.1"/>
    <property type="molecule type" value="mRNA"/>
</dbReference>
<dbReference type="EMBL" id="AY598783">
    <property type="protein sequence ID" value="AAT11020.1"/>
    <property type="molecule type" value="mRNA"/>
</dbReference>
<dbReference type="EMBL" id="AC097639">
    <property type="status" value="NOT_ANNOTATED_CDS"/>
    <property type="molecule type" value="Genomic_DNA"/>
</dbReference>
<dbReference type="EMBL" id="AC103558">
    <property type="status" value="NOT_ANNOTATED_CDS"/>
    <property type="molecule type" value="Genomic_DNA"/>
</dbReference>
<dbReference type="EMBL" id="BC041390">
    <property type="protein sequence ID" value="AAH41390.1"/>
    <property type="molecule type" value="mRNA"/>
</dbReference>
<dbReference type="CCDS" id="CCDS2652.1">
    <molecule id="Q8IZV2-1"/>
</dbReference>
<dbReference type="CCDS" id="CCDS82753.1">
    <molecule id="Q8IZV2-2"/>
</dbReference>
<dbReference type="RefSeq" id="NP_001307237.1">
    <molecule id="Q8IZV2-2"/>
    <property type="nucleotide sequence ID" value="NM_001320308.2"/>
</dbReference>
<dbReference type="RefSeq" id="NP_849199.2">
    <molecule id="Q8IZV2-1"/>
    <property type="nucleotide sequence ID" value="NM_178868.4"/>
</dbReference>
<dbReference type="RefSeq" id="XP_054201362.1">
    <molecule id="Q8IZV2-2"/>
    <property type="nucleotide sequence ID" value="XM_054345387.1"/>
</dbReference>
<dbReference type="SMR" id="Q8IZV2"/>
<dbReference type="BioGRID" id="127434">
    <property type="interactions" value="85"/>
</dbReference>
<dbReference type="FunCoup" id="Q8IZV2">
    <property type="interactions" value="933"/>
</dbReference>
<dbReference type="IntAct" id="Q8IZV2">
    <property type="interactions" value="60"/>
</dbReference>
<dbReference type="MINT" id="Q8IZV2"/>
<dbReference type="STRING" id="9606.ENSP00000307741"/>
<dbReference type="GlyGen" id="Q8IZV2">
    <property type="glycosylation" value="1 site, 1 O-linked glycan (1 site)"/>
</dbReference>
<dbReference type="iPTMnet" id="Q8IZV2"/>
<dbReference type="PhosphoSitePlus" id="Q8IZV2"/>
<dbReference type="BioMuta" id="CMTM8"/>
<dbReference type="DMDM" id="145559454"/>
<dbReference type="jPOST" id="Q8IZV2"/>
<dbReference type="MassIVE" id="Q8IZV2"/>
<dbReference type="PaxDb" id="9606-ENSP00000307741"/>
<dbReference type="PeptideAtlas" id="Q8IZV2"/>
<dbReference type="ProteomicsDB" id="706"/>
<dbReference type="ProteomicsDB" id="71435">
    <molecule id="Q8IZV2-1"/>
</dbReference>
<dbReference type="Antibodypedia" id="27732">
    <property type="antibodies" value="139 antibodies from 25 providers"/>
</dbReference>
<dbReference type="DNASU" id="152189"/>
<dbReference type="Ensembl" id="ENST00000307526.4">
    <molecule id="Q8IZV2-1"/>
    <property type="protein sequence ID" value="ENSP00000307741.3"/>
    <property type="gene ID" value="ENSG00000170293.9"/>
</dbReference>
<dbReference type="Ensembl" id="ENST00000458535.6">
    <molecule id="Q8IZV2-2"/>
    <property type="protein sequence ID" value="ENSP00000412934.2"/>
    <property type="gene ID" value="ENSG00000170293.9"/>
</dbReference>
<dbReference type="GeneID" id="152189"/>
<dbReference type="KEGG" id="hsa:152189"/>
<dbReference type="MANE-Select" id="ENST00000307526.4">
    <property type="protein sequence ID" value="ENSP00000307741.3"/>
    <property type="RefSeq nucleotide sequence ID" value="NM_178868.5"/>
    <property type="RefSeq protein sequence ID" value="NP_849199.2"/>
</dbReference>
<dbReference type="UCSC" id="uc003cex.4">
    <molecule id="Q8IZV2-1"/>
    <property type="organism name" value="human"/>
</dbReference>
<dbReference type="AGR" id="HGNC:19179"/>
<dbReference type="CTD" id="152189"/>
<dbReference type="DisGeNET" id="152189"/>
<dbReference type="GeneCards" id="CMTM8"/>
<dbReference type="HGNC" id="HGNC:19179">
    <property type="gene designation" value="CMTM8"/>
</dbReference>
<dbReference type="HPA" id="ENSG00000170293">
    <property type="expression patterns" value="Tissue enhanced (pancreas)"/>
</dbReference>
<dbReference type="MIM" id="607891">
    <property type="type" value="gene"/>
</dbReference>
<dbReference type="neXtProt" id="NX_Q8IZV2"/>
<dbReference type="OpenTargets" id="ENSG00000170293"/>
<dbReference type="PharmGKB" id="PA38818"/>
<dbReference type="VEuPathDB" id="HostDB:ENSG00000170293"/>
<dbReference type="eggNOG" id="KOG4788">
    <property type="taxonomic scope" value="Eukaryota"/>
</dbReference>
<dbReference type="GeneTree" id="ENSGT00940000160520"/>
<dbReference type="HOGENOM" id="CLU_2108188_0_0_1"/>
<dbReference type="InParanoid" id="Q8IZV2"/>
<dbReference type="OMA" id="IRHIPWT"/>
<dbReference type="OrthoDB" id="6481667at2759"/>
<dbReference type="PAN-GO" id="Q8IZV2">
    <property type="GO annotations" value="3 GO annotations based on evolutionary models"/>
</dbReference>
<dbReference type="PhylomeDB" id="Q8IZV2"/>
<dbReference type="TreeFam" id="TF316174"/>
<dbReference type="PathwayCommons" id="Q8IZV2"/>
<dbReference type="SignaLink" id="Q8IZV2"/>
<dbReference type="BioGRID-ORCS" id="152189">
    <property type="hits" value="17 hits in 1151 CRISPR screens"/>
</dbReference>
<dbReference type="ChiTaRS" id="CMTM8">
    <property type="organism name" value="human"/>
</dbReference>
<dbReference type="GenomeRNAi" id="152189"/>
<dbReference type="Pharos" id="Q8IZV2">
    <property type="development level" value="Tbio"/>
</dbReference>
<dbReference type="PRO" id="PR:Q8IZV2"/>
<dbReference type="Proteomes" id="UP000005640">
    <property type="component" value="Chromosome 3"/>
</dbReference>
<dbReference type="RNAct" id="Q8IZV2">
    <property type="molecule type" value="protein"/>
</dbReference>
<dbReference type="Bgee" id="ENSG00000170293">
    <property type="expression patterns" value="Expressed in secondary oocyte and 136 other cell types or tissues"/>
</dbReference>
<dbReference type="GO" id="GO:0005737">
    <property type="term" value="C:cytoplasm"/>
    <property type="evidence" value="ECO:0007669"/>
    <property type="project" value="UniProtKB-SubCell"/>
</dbReference>
<dbReference type="GO" id="GO:0005615">
    <property type="term" value="C:extracellular space"/>
    <property type="evidence" value="ECO:0007669"/>
    <property type="project" value="UniProtKB-KW"/>
</dbReference>
<dbReference type="GO" id="GO:0016020">
    <property type="term" value="C:membrane"/>
    <property type="evidence" value="ECO:0000318"/>
    <property type="project" value="GO_Central"/>
</dbReference>
<dbReference type="GO" id="GO:0005654">
    <property type="term" value="C:nucleoplasm"/>
    <property type="evidence" value="ECO:0000314"/>
    <property type="project" value="HPA"/>
</dbReference>
<dbReference type="GO" id="GO:0005125">
    <property type="term" value="F:cytokine activity"/>
    <property type="evidence" value="ECO:0007669"/>
    <property type="project" value="UniProtKB-KW"/>
</dbReference>
<dbReference type="GO" id="GO:0019911">
    <property type="term" value="F:structural constituent of myelin sheath"/>
    <property type="evidence" value="ECO:0000318"/>
    <property type="project" value="GO_Central"/>
</dbReference>
<dbReference type="GO" id="GO:0006935">
    <property type="term" value="P:chemotaxis"/>
    <property type="evidence" value="ECO:0007669"/>
    <property type="project" value="UniProtKB-KW"/>
</dbReference>
<dbReference type="GO" id="GO:0042552">
    <property type="term" value="P:myelination"/>
    <property type="evidence" value="ECO:0000318"/>
    <property type="project" value="GO_Central"/>
</dbReference>
<dbReference type="InterPro" id="IPR013295">
    <property type="entry name" value="MAL"/>
</dbReference>
<dbReference type="InterPro" id="IPR008253">
    <property type="entry name" value="Marvel"/>
</dbReference>
<dbReference type="InterPro" id="IPR050578">
    <property type="entry name" value="MARVEL-CKLF_proteins"/>
</dbReference>
<dbReference type="PANTHER" id="PTHR22776:SF10">
    <property type="entry name" value="CKLF-LIKE MARVEL TRANSMEMBRANE DOMAIN-CONTAINING PROTEIN 8"/>
    <property type="match status" value="1"/>
</dbReference>
<dbReference type="PANTHER" id="PTHR22776">
    <property type="entry name" value="MARVEL-CONTAINING POTENTIAL LIPID RAFT-ASSOCIATED PROTEIN"/>
    <property type="match status" value="1"/>
</dbReference>
<dbReference type="Pfam" id="PF01284">
    <property type="entry name" value="MARVEL"/>
    <property type="match status" value="1"/>
</dbReference>
<dbReference type="PRINTS" id="PR01884">
    <property type="entry name" value="MALPROTEIN"/>
</dbReference>
<dbReference type="PROSITE" id="PS51225">
    <property type="entry name" value="MARVEL"/>
    <property type="match status" value="1"/>
</dbReference>
<name>CKLF8_HUMAN</name>
<feature type="chain" id="PRO_0000186112" description="CKLF-like MARVEL transmembrane domain-containing protein 8">
    <location>
        <begin position="1"/>
        <end position="173"/>
    </location>
</feature>
<feature type="transmembrane region" description="Helical" evidence="1">
    <location>
        <begin position="40"/>
        <end position="60"/>
    </location>
</feature>
<feature type="transmembrane region" description="Helical" evidence="1">
    <location>
        <begin position="70"/>
        <end position="90"/>
    </location>
</feature>
<feature type="transmembrane region" description="Helical" evidence="1">
    <location>
        <begin position="105"/>
        <end position="125"/>
    </location>
</feature>
<feature type="transmembrane region" description="Helical" evidence="1">
    <location>
        <begin position="147"/>
        <end position="167"/>
    </location>
</feature>
<feature type="domain" description="MARVEL" evidence="2">
    <location>
        <begin position="36"/>
        <end position="168"/>
    </location>
</feature>
<feature type="splice variant" id="VSP_044430" description="In isoform 2." evidence="4">
    <location>
        <begin position="50"/>
        <end position="107"/>
    </location>
</feature>
<feature type="sequence conflict" description="In Ref. 1; AAN73034." evidence="5" ref="1">
    <original>S</original>
    <variation>F</variation>
    <location>
        <position position="24"/>
    </location>
</feature>
<feature type="sequence conflict" description="In Ref. 4; AAH41390." evidence="5" ref="4">
    <original>P</original>
    <variation>H</variation>
    <location>
        <position position="41"/>
    </location>
</feature>
<feature type="sequence conflict" description="In Ref. 4; AAH41390." evidence="5" ref="4">
    <original>F</original>
    <variation>S</variation>
    <location>
        <position position="79"/>
    </location>
</feature>
<keyword id="KW-0025">Alternative splicing</keyword>
<keyword id="KW-0145">Chemotaxis</keyword>
<keyword id="KW-0202">Cytokine</keyword>
<keyword id="KW-0963">Cytoplasm</keyword>
<keyword id="KW-0472">Membrane</keyword>
<keyword id="KW-0539">Nucleus</keyword>
<keyword id="KW-1267">Proteomics identification</keyword>
<keyword id="KW-1185">Reference proteome</keyword>
<keyword id="KW-0812">Transmembrane</keyword>
<keyword id="KW-1133">Transmembrane helix</keyword>
<gene>
    <name type="primary">CMTM8</name>
    <name type="synonym">CKLFSF8</name>
</gene>
<organism>
    <name type="scientific">Homo sapiens</name>
    <name type="common">Human</name>
    <dbReference type="NCBI Taxonomy" id="9606"/>
    <lineage>
        <taxon>Eukaryota</taxon>
        <taxon>Metazoa</taxon>
        <taxon>Chordata</taxon>
        <taxon>Craniata</taxon>
        <taxon>Vertebrata</taxon>
        <taxon>Euteleostomi</taxon>
        <taxon>Mammalia</taxon>
        <taxon>Eutheria</taxon>
        <taxon>Euarchontoglires</taxon>
        <taxon>Primates</taxon>
        <taxon>Haplorrhini</taxon>
        <taxon>Catarrhini</taxon>
        <taxon>Hominidae</taxon>
        <taxon>Homo</taxon>
    </lineage>
</organism>
<sequence>MEEPQRARSHTVTTTASSFAENFSTSSSSFAYDREFLRTLPGFLIVAEIVLGLLVWTLIAGTEYFRVPAFGWVMFVAVFYWVLTVFFLIIYITMTYTRIPQVPWTTVGLCFNGSAFVLYLSAAVVDASSVSPERDSHNFNSWAASSFFAFLVTICYAGNTYFSFIAWRSRTIQ</sequence>
<evidence type="ECO:0000255" key="1"/>
<evidence type="ECO:0000255" key="2">
    <source>
        <dbReference type="PROSITE-ProRule" id="PRU00581"/>
    </source>
</evidence>
<evidence type="ECO:0000269" key="3">
    <source>
    </source>
</evidence>
<evidence type="ECO:0000303" key="4">
    <source>
    </source>
</evidence>
<evidence type="ECO:0000305" key="5"/>
<accession>Q8IZV2</accession>
<accession>A5D6I7</accession>
<accession>Q8IW01</accession>